<feature type="chain" id="PRO_0000205995" description="Ethanolamine ammonia-lyase small subunit">
    <location>
        <begin position="1"/>
        <end position="293"/>
    </location>
</feature>
<feature type="binding site" evidence="1">
    <location>
        <position position="207"/>
    </location>
    <ligand>
        <name>adenosylcob(III)alamin</name>
        <dbReference type="ChEBI" id="CHEBI:18408"/>
    </ligand>
</feature>
<feature type="binding site" evidence="1">
    <location>
        <position position="228"/>
    </location>
    <ligand>
        <name>adenosylcob(III)alamin</name>
        <dbReference type="ChEBI" id="CHEBI:18408"/>
    </ligand>
</feature>
<gene>
    <name evidence="1" type="primary">eutC</name>
    <name type="ordered locus">lmo1176</name>
</gene>
<evidence type="ECO:0000255" key="1">
    <source>
        <dbReference type="HAMAP-Rule" id="MF_00601"/>
    </source>
</evidence>
<comment type="function">
    <text evidence="1">Catalyzes the deamination of various vicinal amino-alcohols to oxo compounds. Allows this organism to utilize ethanolamine as the sole source of nitrogen and carbon in the presence of external vitamin B12.</text>
</comment>
<comment type="catalytic activity">
    <reaction evidence="1">
        <text>ethanolamine = acetaldehyde + NH4(+)</text>
        <dbReference type="Rhea" id="RHEA:15313"/>
        <dbReference type="ChEBI" id="CHEBI:15343"/>
        <dbReference type="ChEBI" id="CHEBI:28938"/>
        <dbReference type="ChEBI" id="CHEBI:57603"/>
        <dbReference type="EC" id="4.3.1.7"/>
    </reaction>
</comment>
<comment type="cofactor">
    <cofactor evidence="1">
        <name>adenosylcob(III)alamin</name>
        <dbReference type="ChEBI" id="CHEBI:18408"/>
    </cofactor>
    <text evidence="1">Binds between the large and small subunits.</text>
</comment>
<comment type="pathway">
    <text evidence="1">Amine and polyamine degradation; ethanolamine degradation.</text>
</comment>
<comment type="subunit">
    <text evidence="1">The basic unit is a heterodimer which dimerizes to form tetramers. The heterotetramers trimerize; 6 large subunits form a core ring with 6 small subunits projecting outwards.</text>
</comment>
<comment type="subcellular location">
    <subcellularLocation>
        <location evidence="1">Bacterial microcompartment</location>
    </subcellularLocation>
</comment>
<comment type="similarity">
    <text evidence="1">Belongs to the EutC family.</text>
</comment>
<protein>
    <recommendedName>
        <fullName evidence="1">Ethanolamine ammonia-lyase small subunit</fullName>
        <shortName evidence="1">EAL small subunit</shortName>
        <ecNumber evidence="1">4.3.1.7</ecNumber>
    </recommendedName>
</protein>
<proteinExistence type="inferred from homology"/>
<keyword id="KW-1283">Bacterial microcompartment</keyword>
<keyword id="KW-0846">Cobalamin</keyword>
<keyword id="KW-0170">Cobalt</keyword>
<keyword id="KW-0456">Lyase</keyword>
<keyword id="KW-1185">Reference proteome</keyword>
<reference key="1">
    <citation type="journal article" date="2001" name="Science">
        <title>Comparative genomics of Listeria species.</title>
        <authorList>
            <person name="Glaser P."/>
            <person name="Frangeul L."/>
            <person name="Buchrieser C."/>
            <person name="Rusniok C."/>
            <person name="Amend A."/>
            <person name="Baquero F."/>
            <person name="Berche P."/>
            <person name="Bloecker H."/>
            <person name="Brandt P."/>
            <person name="Chakraborty T."/>
            <person name="Charbit A."/>
            <person name="Chetouani F."/>
            <person name="Couve E."/>
            <person name="de Daruvar A."/>
            <person name="Dehoux P."/>
            <person name="Domann E."/>
            <person name="Dominguez-Bernal G."/>
            <person name="Duchaud E."/>
            <person name="Durant L."/>
            <person name="Dussurget O."/>
            <person name="Entian K.-D."/>
            <person name="Fsihi H."/>
            <person name="Garcia-del Portillo F."/>
            <person name="Garrido P."/>
            <person name="Gautier L."/>
            <person name="Goebel W."/>
            <person name="Gomez-Lopez N."/>
            <person name="Hain T."/>
            <person name="Hauf J."/>
            <person name="Jackson D."/>
            <person name="Jones L.-M."/>
            <person name="Kaerst U."/>
            <person name="Kreft J."/>
            <person name="Kuhn M."/>
            <person name="Kunst F."/>
            <person name="Kurapkat G."/>
            <person name="Madueno E."/>
            <person name="Maitournam A."/>
            <person name="Mata Vicente J."/>
            <person name="Ng E."/>
            <person name="Nedjari H."/>
            <person name="Nordsiek G."/>
            <person name="Novella S."/>
            <person name="de Pablos B."/>
            <person name="Perez-Diaz J.-C."/>
            <person name="Purcell R."/>
            <person name="Remmel B."/>
            <person name="Rose M."/>
            <person name="Schlueter T."/>
            <person name="Simoes N."/>
            <person name="Tierrez A."/>
            <person name="Vazquez-Boland J.-A."/>
            <person name="Voss H."/>
            <person name="Wehland J."/>
            <person name="Cossart P."/>
        </authorList>
    </citation>
    <scope>NUCLEOTIDE SEQUENCE [LARGE SCALE GENOMIC DNA]</scope>
    <source>
        <strain>ATCC BAA-679 / EGD-e</strain>
    </source>
</reference>
<accession>Q8Y7U4</accession>
<name>EUTC_LISMO</name>
<sequence length="293" mass="32318">MNEQELKQMIEGILTEMSGGKTTDTVAAVPTKSVVETVVTEGSIPDITEVDIKKQLLVPEPADREGYLKMKQMTPARLGLWRAGPRYKTETILRFRADHAVAQDSVFSYVSEDLVKEMNFIPVNTKCQDKDEYLTRPDLGREFDDEMVEVIRANTTKNAKLQIVVGDGLSSAAIEANIKDILPSIKQGLKMYNLDFDNIIFVKHCRVPSMDKIGEITGADVVCLLVGERPGLVTAESMSAYIAYKPTVGMPEARRTVISNIHSGGTPPVEAGAYIAELIHNMLEKKCSGIDLK</sequence>
<dbReference type="EC" id="4.3.1.7" evidence="1"/>
<dbReference type="EMBL" id="AL591978">
    <property type="protein sequence ID" value="CAC99254.1"/>
    <property type="molecule type" value="Genomic_DNA"/>
</dbReference>
<dbReference type="PIR" id="AH1221">
    <property type="entry name" value="AH1221"/>
</dbReference>
<dbReference type="RefSeq" id="NP_464701.1">
    <property type="nucleotide sequence ID" value="NC_003210.1"/>
</dbReference>
<dbReference type="RefSeq" id="WP_003732749.1">
    <property type="nucleotide sequence ID" value="NZ_CP149495.1"/>
</dbReference>
<dbReference type="SMR" id="Q8Y7U4"/>
<dbReference type="STRING" id="169963.gene:17593832"/>
<dbReference type="PaxDb" id="169963-lmo1176"/>
<dbReference type="EnsemblBacteria" id="CAC99254">
    <property type="protein sequence ID" value="CAC99254"/>
    <property type="gene ID" value="CAC99254"/>
</dbReference>
<dbReference type="GeneID" id="986120"/>
<dbReference type="KEGG" id="lmo:lmo1176"/>
<dbReference type="PATRIC" id="fig|169963.11.peg.1207"/>
<dbReference type="eggNOG" id="COG4302">
    <property type="taxonomic scope" value="Bacteria"/>
</dbReference>
<dbReference type="HOGENOM" id="CLU_068224_0_0_9"/>
<dbReference type="OrthoDB" id="114248at2"/>
<dbReference type="PhylomeDB" id="Q8Y7U4"/>
<dbReference type="BioCyc" id="LMON169963:LMO1176-MONOMER"/>
<dbReference type="UniPathway" id="UPA00560"/>
<dbReference type="Proteomes" id="UP000000817">
    <property type="component" value="Chromosome"/>
</dbReference>
<dbReference type="GO" id="GO:0009350">
    <property type="term" value="C:ethanolamine ammonia-lyase complex"/>
    <property type="evidence" value="ECO:0000318"/>
    <property type="project" value="GO_Central"/>
</dbReference>
<dbReference type="GO" id="GO:0031471">
    <property type="term" value="C:ethanolamine degradation polyhedral organelle"/>
    <property type="evidence" value="ECO:0007669"/>
    <property type="project" value="UniProtKB-UniRule"/>
</dbReference>
<dbReference type="GO" id="GO:0031419">
    <property type="term" value="F:cobalamin binding"/>
    <property type="evidence" value="ECO:0007669"/>
    <property type="project" value="UniProtKB-UniRule"/>
</dbReference>
<dbReference type="GO" id="GO:0008851">
    <property type="term" value="F:ethanolamine ammonia-lyase activity"/>
    <property type="evidence" value="ECO:0007669"/>
    <property type="project" value="UniProtKB-UniRule"/>
</dbReference>
<dbReference type="GO" id="GO:0006520">
    <property type="term" value="P:amino acid metabolic process"/>
    <property type="evidence" value="ECO:0007669"/>
    <property type="project" value="InterPro"/>
</dbReference>
<dbReference type="GO" id="GO:0046336">
    <property type="term" value="P:ethanolamine catabolic process"/>
    <property type="evidence" value="ECO:0007669"/>
    <property type="project" value="UniProtKB-UniRule"/>
</dbReference>
<dbReference type="FunFam" id="1.10.30.40:FF:000001">
    <property type="entry name" value="Ethanolamine ammonia-lyase light chain"/>
    <property type="match status" value="1"/>
</dbReference>
<dbReference type="FunFam" id="3.40.50.11240:FF:000001">
    <property type="entry name" value="Ethanolamine ammonia-lyase light chain"/>
    <property type="match status" value="1"/>
</dbReference>
<dbReference type="Gene3D" id="3.40.50.11240">
    <property type="entry name" value="Ethanolamine ammonia-lyase light chain (EutC)"/>
    <property type="match status" value="1"/>
</dbReference>
<dbReference type="Gene3D" id="1.10.30.40">
    <property type="entry name" value="Ethanolamine ammonia-lyase light chain (EutC), N-terminal domain"/>
    <property type="match status" value="1"/>
</dbReference>
<dbReference type="HAMAP" id="MF_00601">
    <property type="entry name" value="EutC"/>
    <property type="match status" value="1"/>
</dbReference>
<dbReference type="InterPro" id="IPR009246">
    <property type="entry name" value="EutC"/>
</dbReference>
<dbReference type="InterPro" id="IPR042251">
    <property type="entry name" value="EutC_C"/>
</dbReference>
<dbReference type="InterPro" id="IPR042255">
    <property type="entry name" value="EutC_N"/>
</dbReference>
<dbReference type="NCBIfam" id="NF003971">
    <property type="entry name" value="PRK05465.1"/>
    <property type="match status" value="1"/>
</dbReference>
<dbReference type="PANTHER" id="PTHR39330">
    <property type="entry name" value="ETHANOLAMINE AMMONIA-LYASE LIGHT CHAIN"/>
    <property type="match status" value="1"/>
</dbReference>
<dbReference type="PANTHER" id="PTHR39330:SF1">
    <property type="entry name" value="ETHANOLAMINE AMMONIA-LYASE SMALL SUBUNIT"/>
    <property type="match status" value="1"/>
</dbReference>
<dbReference type="Pfam" id="PF05985">
    <property type="entry name" value="EutC"/>
    <property type="match status" value="1"/>
</dbReference>
<dbReference type="PIRSF" id="PIRSF018982">
    <property type="entry name" value="EutC"/>
    <property type="match status" value="1"/>
</dbReference>
<organism>
    <name type="scientific">Listeria monocytogenes serovar 1/2a (strain ATCC BAA-679 / EGD-e)</name>
    <dbReference type="NCBI Taxonomy" id="169963"/>
    <lineage>
        <taxon>Bacteria</taxon>
        <taxon>Bacillati</taxon>
        <taxon>Bacillota</taxon>
        <taxon>Bacilli</taxon>
        <taxon>Bacillales</taxon>
        <taxon>Listeriaceae</taxon>
        <taxon>Listeria</taxon>
    </lineage>
</organism>